<accession>Q3BY45</accession>
<feature type="chain" id="PRO_1000066149" description="Putative NADH dehydrogenase/NAD(P)H nitroreductase XCV0587">
    <location>
        <begin position="1"/>
        <end position="196"/>
    </location>
</feature>
<keyword id="KW-0285">Flavoprotein</keyword>
<keyword id="KW-0288">FMN</keyword>
<keyword id="KW-0520">NAD</keyword>
<keyword id="KW-0521">NADP</keyword>
<keyword id="KW-0560">Oxidoreductase</keyword>
<organism>
    <name type="scientific">Xanthomonas euvesicatoria pv. vesicatoria (strain 85-10)</name>
    <name type="common">Xanthomonas campestris pv. vesicatoria</name>
    <dbReference type="NCBI Taxonomy" id="316273"/>
    <lineage>
        <taxon>Bacteria</taxon>
        <taxon>Pseudomonadati</taxon>
        <taxon>Pseudomonadota</taxon>
        <taxon>Gammaproteobacteria</taxon>
        <taxon>Lysobacterales</taxon>
        <taxon>Lysobacteraceae</taxon>
        <taxon>Xanthomonas</taxon>
    </lineage>
</organism>
<reference key="1">
    <citation type="journal article" date="2005" name="J. Bacteriol.">
        <title>Insights into genome plasticity and pathogenicity of the plant pathogenic Bacterium Xanthomonas campestris pv. vesicatoria revealed by the complete genome sequence.</title>
        <authorList>
            <person name="Thieme F."/>
            <person name="Koebnik R."/>
            <person name="Bekel T."/>
            <person name="Berger C."/>
            <person name="Boch J."/>
            <person name="Buettner D."/>
            <person name="Caldana C."/>
            <person name="Gaigalat L."/>
            <person name="Goesmann A."/>
            <person name="Kay S."/>
            <person name="Kirchner O."/>
            <person name="Lanz C."/>
            <person name="Linke B."/>
            <person name="McHardy A.C."/>
            <person name="Meyer F."/>
            <person name="Mittenhuber G."/>
            <person name="Nies D.H."/>
            <person name="Niesbach-Kloesgen U."/>
            <person name="Patschkowski T."/>
            <person name="Rueckert C."/>
            <person name="Rupp O."/>
            <person name="Schneiker S."/>
            <person name="Schuster S.C."/>
            <person name="Vorhoelter F.J."/>
            <person name="Weber E."/>
            <person name="Puehler A."/>
            <person name="Bonas U."/>
            <person name="Bartels D."/>
            <person name="Kaiser O."/>
        </authorList>
    </citation>
    <scope>NUCLEOTIDE SEQUENCE [LARGE SCALE GENOMIC DNA]</scope>
    <source>
        <strain>85-10</strain>
    </source>
</reference>
<comment type="cofactor">
    <cofactor evidence="1">
        <name>FMN</name>
        <dbReference type="ChEBI" id="CHEBI:58210"/>
    </cofactor>
</comment>
<comment type="similarity">
    <text evidence="1">Belongs to the nitroreductase family. HadB/RutE subfamily.</text>
</comment>
<evidence type="ECO:0000255" key="1">
    <source>
        <dbReference type="HAMAP-Rule" id="MF_01204"/>
    </source>
</evidence>
<gene>
    <name type="ordered locus">XCV0587</name>
</gene>
<sequence>MSDSLNAAALDQLFRTARTQNAFADTPVSHEVLRELYELVKWGPTAANSGPARFVFVTSAEGKAKLKPALSEGNAAKTLAAPVTVIVAHDEDFHEKLPYLFPHADAKSWFDGPREGRTESAFRNGSLQGAYLILAARALGLDAGPMSGFDNAKVDAAFFAGTPIKSNFLVNLGYGDPAGLFPRSPRLSFDEAARFE</sequence>
<dbReference type="EC" id="1.-.-.-" evidence="1"/>
<dbReference type="EMBL" id="AM039952">
    <property type="protein sequence ID" value="CAJ22218.1"/>
    <property type="molecule type" value="Genomic_DNA"/>
</dbReference>
<dbReference type="RefSeq" id="WP_008571724.1">
    <property type="nucleotide sequence ID" value="NZ_CP017190.1"/>
</dbReference>
<dbReference type="SMR" id="Q3BY45"/>
<dbReference type="STRING" id="456327.BJD11_19885"/>
<dbReference type="KEGG" id="xcv:XCV0587"/>
<dbReference type="eggNOG" id="COG0778">
    <property type="taxonomic scope" value="Bacteria"/>
</dbReference>
<dbReference type="HOGENOM" id="CLU_084441_0_0_6"/>
<dbReference type="Proteomes" id="UP000007069">
    <property type="component" value="Chromosome"/>
</dbReference>
<dbReference type="GO" id="GO:0016491">
    <property type="term" value="F:oxidoreductase activity"/>
    <property type="evidence" value="ECO:0007669"/>
    <property type="project" value="UniProtKB-UniRule"/>
</dbReference>
<dbReference type="CDD" id="cd02148">
    <property type="entry name" value="RutE-like"/>
    <property type="match status" value="1"/>
</dbReference>
<dbReference type="Gene3D" id="3.40.109.10">
    <property type="entry name" value="NADH Oxidase"/>
    <property type="match status" value="1"/>
</dbReference>
<dbReference type="HAMAP" id="MF_01204">
    <property type="entry name" value="Oxidoreductase_RutE_HadB"/>
    <property type="match status" value="1"/>
</dbReference>
<dbReference type="InterPro" id="IPR029479">
    <property type="entry name" value="Nitroreductase"/>
</dbReference>
<dbReference type="InterPro" id="IPR000415">
    <property type="entry name" value="Nitroreductase-like"/>
</dbReference>
<dbReference type="InterPro" id="IPR050461">
    <property type="entry name" value="Nitroreductase_HadB/RutE"/>
</dbReference>
<dbReference type="InterPro" id="IPR023936">
    <property type="entry name" value="RutE-like"/>
</dbReference>
<dbReference type="NCBIfam" id="NF003768">
    <property type="entry name" value="PRK05365.1"/>
    <property type="match status" value="1"/>
</dbReference>
<dbReference type="PANTHER" id="PTHR43543">
    <property type="entry name" value="MALONIC SEMIALDEHYDE REDUCTASE RUTE-RELATED"/>
    <property type="match status" value="1"/>
</dbReference>
<dbReference type="PANTHER" id="PTHR43543:SF1">
    <property type="entry name" value="MALONIC SEMIALDEHYDE REDUCTASE RUTE-RELATED"/>
    <property type="match status" value="1"/>
</dbReference>
<dbReference type="Pfam" id="PF00881">
    <property type="entry name" value="Nitroreductase"/>
    <property type="match status" value="1"/>
</dbReference>
<dbReference type="SUPFAM" id="SSF55469">
    <property type="entry name" value="FMN-dependent nitroreductase-like"/>
    <property type="match status" value="1"/>
</dbReference>
<proteinExistence type="inferred from homology"/>
<protein>
    <recommendedName>
        <fullName evidence="1">Putative NADH dehydrogenase/NAD(P)H nitroreductase XCV0587</fullName>
        <ecNumber evidence="1">1.-.-.-</ecNumber>
    </recommendedName>
</protein>
<name>Y587_XANE5</name>